<gene>
    <name evidence="1" type="primary">psmB</name>
    <name type="ordered locus">Mmah_0753</name>
</gene>
<protein>
    <recommendedName>
        <fullName evidence="1">Proteasome subunit beta</fullName>
        <ecNumber evidence="1">3.4.25.1</ecNumber>
    </recommendedName>
    <alternativeName>
        <fullName evidence="1">20S proteasome beta subunit</fullName>
    </alternativeName>
    <alternativeName>
        <fullName evidence="1">Proteasome core protein PsmB</fullName>
    </alternativeName>
</protein>
<sequence>MDNDKHLKGTTTVGIVCSDGVVLATEKRATMGNFIASKTAKKIYQIDDLVGMTTAGSVGDAQQLVRMISVESKLYKMRRQESITIKGLTTLLSNILGGQRYFPLMVQLLVGGVDKNGPAIFSLDAMGGNIEETKAVATGSGSPMAYGVLEDRYHEGINVDEGMELAVRALYNAMKRDSASGNGIDVVKITADGYKRIETGEVDKILENLK</sequence>
<dbReference type="EC" id="3.4.25.1" evidence="1"/>
<dbReference type="EMBL" id="CP001994">
    <property type="protein sequence ID" value="ADE36277.1"/>
    <property type="molecule type" value="Genomic_DNA"/>
</dbReference>
<dbReference type="RefSeq" id="WP_013037220.1">
    <property type="nucleotide sequence ID" value="NC_014002.1"/>
</dbReference>
<dbReference type="SMR" id="D5EAS6"/>
<dbReference type="STRING" id="547558.Mmah_0753"/>
<dbReference type="MEROPS" id="T01.002"/>
<dbReference type="GeneID" id="8982914"/>
<dbReference type="KEGG" id="mmh:Mmah_0753"/>
<dbReference type="HOGENOM" id="CLU_035750_7_2_2"/>
<dbReference type="OrthoDB" id="6330at2157"/>
<dbReference type="Proteomes" id="UP000001059">
    <property type="component" value="Chromosome"/>
</dbReference>
<dbReference type="GO" id="GO:0005737">
    <property type="term" value="C:cytoplasm"/>
    <property type="evidence" value="ECO:0007669"/>
    <property type="project" value="UniProtKB-SubCell"/>
</dbReference>
<dbReference type="GO" id="GO:0019774">
    <property type="term" value="C:proteasome core complex, beta-subunit complex"/>
    <property type="evidence" value="ECO:0007669"/>
    <property type="project" value="UniProtKB-UniRule"/>
</dbReference>
<dbReference type="GO" id="GO:0004298">
    <property type="term" value="F:threonine-type endopeptidase activity"/>
    <property type="evidence" value="ECO:0007669"/>
    <property type="project" value="UniProtKB-UniRule"/>
</dbReference>
<dbReference type="GO" id="GO:0010498">
    <property type="term" value="P:proteasomal protein catabolic process"/>
    <property type="evidence" value="ECO:0007669"/>
    <property type="project" value="UniProtKB-UniRule"/>
</dbReference>
<dbReference type="CDD" id="cd03764">
    <property type="entry name" value="proteasome_beta_archeal"/>
    <property type="match status" value="1"/>
</dbReference>
<dbReference type="FunFam" id="3.60.20.10:FF:000049">
    <property type="entry name" value="Proteasome subunit beta"/>
    <property type="match status" value="1"/>
</dbReference>
<dbReference type="Gene3D" id="3.60.20.10">
    <property type="entry name" value="Glutamine Phosphoribosylpyrophosphate, subunit 1, domain 1"/>
    <property type="match status" value="1"/>
</dbReference>
<dbReference type="HAMAP" id="MF_02113_A">
    <property type="entry name" value="Proteasome_B_A"/>
    <property type="match status" value="1"/>
</dbReference>
<dbReference type="InterPro" id="IPR029055">
    <property type="entry name" value="Ntn_hydrolases_N"/>
</dbReference>
<dbReference type="InterPro" id="IPR019983">
    <property type="entry name" value="Pept_T1A_Psome_bsu_arc"/>
</dbReference>
<dbReference type="InterPro" id="IPR000243">
    <property type="entry name" value="Pept_T1A_subB"/>
</dbReference>
<dbReference type="InterPro" id="IPR016050">
    <property type="entry name" value="Proteasome_bsu_CS"/>
</dbReference>
<dbReference type="InterPro" id="IPR001353">
    <property type="entry name" value="Proteasome_sua/b"/>
</dbReference>
<dbReference type="InterPro" id="IPR023333">
    <property type="entry name" value="Proteasome_suB-type"/>
</dbReference>
<dbReference type="NCBIfam" id="TIGR03634">
    <property type="entry name" value="arc_protsome_B"/>
    <property type="match status" value="1"/>
</dbReference>
<dbReference type="PANTHER" id="PTHR32194:SF0">
    <property type="entry name" value="ATP-DEPENDENT PROTEASE SUBUNIT HSLV"/>
    <property type="match status" value="1"/>
</dbReference>
<dbReference type="PANTHER" id="PTHR32194">
    <property type="entry name" value="METALLOPROTEASE TLDD"/>
    <property type="match status" value="1"/>
</dbReference>
<dbReference type="Pfam" id="PF00227">
    <property type="entry name" value="Proteasome"/>
    <property type="match status" value="1"/>
</dbReference>
<dbReference type="PRINTS" id="PR00141">
    <property type="entry name" value="PROTEASOME"/>
</dbReference>
<dbReference type="SUPFAM" id="SSF56235">
    <property type="entry name" value="N-terminal nucleophile aminohydrolases (Ntn hydrolases)"/>
    <property type="match status" value="1"/>
</dbReference>
<dbReference type="PROSITE" id="PS00854">
    <property type="entry name" value="PROTEASOME_BETA_1"/>
    <property type="match status" value="1"/>
</dbReference>
<dbReference type="PROSITE" id="PS51476">
    <property type="entry name" value="PROTEASOME_BETA_2"/>
    <property type="match status" value="1"/>
</dbReference>
<proteinExistence type="inferred from homology"/>
<reference key="1">
    <citation type="submission" date="2010-03" db="EMBL/GenBank/DDBJ databases">
        <title>The complete genome of Methanohalophilus mahii DSM 5219.</title>
        <authorList>
            <consortium name="US DOE Joint Genome Institute (JGI-PGF)"/>
            <person name="Lucas S."/>
            <person name="Copeland A."/>
            <person name="Lapidus A."/>
            <person name="Glavina del Rio T."/>
            <person name="Dalin E."/>
            <person name="Tice H."/>
            <person name="Bruce D."/>
            <person name="Goodwin L."/>
            <person name="Pitluck S."/>
            <person name="Kyrpides N."/>
            <person name="Mavromatis K."/>
            <person name="Ivanova N."/>
            <person name="Lykidis A."/>
            <person name="Saunders E."/>
            <person name="Brettin T."/>
            <person name="Detter J.C."/>
            <person name="Han C."/>
            <person name="Land M."/>
            <person name="Hauser L."/>
            <person name="Markowitz V."/>
            <person name="Cheng J.-F."/>
            <person name="Hugenholtz P."/>
            <person name="Woyke T."/>
            <person name="Wu D."/>
            <person name="Spring S."/>
            <person name="Schneider S."/>
            <person name="Schroeder M."/>
            <person name="Klenk H.-P."/>
            <person name="Eisen J.A."/>
        </authorList>
    </citation>
    <scope>NUCLEOTIDE SEQUENCE [LARGE SCALE GENOMIC DNA]</scope>
    <source>
        <strain>ATCC 35705 / DSM 5219 / SLP</strain>
    </source>
</reference>
<feature type="propeptide" id="PRO_0000397360" description="Removed in mature form; by autocatalysis" evidence="1">
    <location>
        <begin position="1"/>
        <end position="9"/>
    </location>
</feature>
<feature type="chain" id="PRO_0000397361" description="Proteasome subunit beta">
    <location>
        <begin position="10"/>
        <end position="210"/>
    </location>
</feature>
<feature type="active site" description="Nucleophile" evidence="1">
    <location>
        <position position="10"/>
    </location>
</feature>
<evidence type="ECO:0000255" key="1">
    <source>
        <dbReference type="HAMAP-Rule" id="MF_02113"/>
    </source>
</evidence>
<comment type="function">
    <text evidence="1">Component of the proteasome core, a large protease complex with broad specificity involved in protein degradation.</text>
</comment>
<comment type="catalytic activity">
    <reaction evidence="1">
        <text>Cleavage of peptide bonds with very broad specificity.</text>
        <dbReference type="EC" id="3.4.25.1"/>
    </reaction>
</comment>
<comment type="activity regulation">
    <text evidence="1">The formation of the proteasomal ATPase PAN-20S proteasome complex, via the docking of the C-termini of PAN into the intersubunit pockets in the alpha-rings, triggers opening of the gate for substrate entry. Interconversion between the open-gate and close-gate conformations leads to a dynamic regulation of the 20S proteasome proteolysis activity.</text>
</comment>
<comment type="subunit">
    <text evidence="1">The 20S proteasome core is composed of 14 alpha and 14 beta subunits that assemble into four stacked heptameric rings, resulting in a barrel-shaped structure. The two inner rings, each composed of seven catalytic beta subunits, are sandwiched by two outer rings, each composed of seven alpha subunits. The catalytic chamber with the active sites is on the inside of the barrel. Has a gated structure, the ends of the cylinder being occluded by the N-termini of the alpha-subunits. Is capped at one or both ends by the proteasome regulatory ATPase, PAN.</text>
</comment>
<comment type="subcellular location">
    <subcellularLocation>
        <location evidence="1">Cytoplasm</location>
    </subcellularLocation>
</comment>
<comment type="similarity">
    <text evidence="1">Belongs to the peptidase T1B family.</text>
</comment>
<keyword id="KW-0068">Autocatalytic cleavage</keyword>
<keyword id="KW-0963">Cytoplasm</keyword>
<keyword id="KW-0378">Hydrolase</keyword>
<keyword id="KW-0645">Protease</keyword>
<keyword id="KW-0647">Proteasome</keyword>
<keyword id="KW-1185">Reference proteome</keyword>
<keyword id="KW-0888">Threonine protease</keyword>
<keyword id="KW-0865">Zymogen</keyword>
<accession>D5EAS6</accession>
<name>PSB_METMS</name>
<organism>
    <name type="scientific">Methanohalophilus mahii (strain ATCC 35705 / DSM 5219 / SLP)</name>
    <dbReference type="NCBI Taxonomy" id="547558"/>
    <lineage>
        <taxon>Archaea</taxon>
        <taxon>Methanobacteriati</taxon>
        <taxon>Methanobacteriota</taxon>
        <taxon>Stenosarchaea group</taxon>
        <taxon>Methanomicrobia</taxon>
        <taxon>Methanosarcinales</taxon>
        <taxon>Methanosarcinaceae</taxon>
        <taxon>Methanohalophilus</taxon>
    </lineage>
</organism>